<comment type="function">
    <text evidence="1">Functions in the biosynthesis of branched-chain amino acids. Catalyzes the dehydration of (2R,3R)-2,3-dihydroxy-3-methylpentanoate (2,3-dihydroxy-3-methylvalerate) into 2-oxo-3-methylpentanoate (2-oxo-3-methylvalerate) and of (2R)-2,3-dihydroxy-3-methylbutanoate (2,3-dihydroxyisovalerate) into 2-oxo-3-methylbutanoate (2-oxoisovalerate), the penultimate precursor to L-isoleucine and L-valine, respectively.</text>
</comment>
<comment type="catalytic activity">
    <reaction evidence="1">
        <text>(2R)-2,3-dihydroxy-3-methylbutanoate = 3-methyl-2-oxobutanoate + H2O</text>
        <dbReference type="Rhea" id="RHEA:24809"/>
        <dbReference type="ChEBI" id="CHEBI:11851"/>
        <dbReference type="ChEBI" id="CHEBI:15377"/>
        <dbReference type="ChEBI" id="CHEBI:49072"/>
        <dbReference type="EC" id="4.2.1.9"/>
    </reaction>
    <physiologicalReaction direction="left-to-right" evidence="1">
        <dbReference type="Rhea" id="RHEA:24810"/>
    </physiologicalReaction>
</comment>
<comment type="catalytic activity">
    <reaction evidence="1">
        <text>(2R,3R)-2,3-dihydroxy-3-methylpentanoate = (S)-3-methyl-2-oxopentanoate + H2O</text>
        <dbReference type="Rhea" id="RHEA:27694"/>
        <dbReference type="ChEBI" id="CHEBI:15377"/>
        <dbReference type="ChEBI" id="CHEBI:35146"/>
        <dbReference type="ChEBI" id="CHEBI:49258"/>
        <dbReference type="EC" id="4.2.1.9"/>
    </reaction>
    <physiologicalReaction direction="left-to-right" evidence="1">
        <dbReference type="Rhea" id="RHEA:27695"/>
    </physiologicalReaction>
</comment>
<comment type="cofactor">
    <cofactor evidence="1">
        <name>[2Fe-2S] cluster</name>
        <dbReference type="ChEBI" id="CHEBI:190135"/>
    </cofactor>
    <text evidence="1">Binds 1 [2Fe-2S] cluster per subunit. This cluster acts as a Lewis acid cofactor.</text>
</comment>
<comment type="cofactor">
    <cofactor evidence="1">
        <name>Mg(2+)</name>
        <dbReference type="ChEBI" id="CHEBI:18420"/>
    </cofactor>
</comment>
<comment type="pathway">
    <text evidence="1">Amino-acid biosynthesis; L-isoleucine biosynthesis; L-isoleucine from 2-oxobutanoate: step 3/4.</text>
</comment>
<comment type="pathway">
    <text evidence="1">Amino-acid biosynthesis; L-valine biosynthesis; L-valine from pyruvate: step 3/4.</text>
</comment>
<comment type="subunit">
    <text evidence="1">Homodimer.</text>
</comment>
<comment type="similarity">
    <text evidence="1">Belongs to the IlvD/Edd family.</text>
</comment>
<organism>
    <name type="scientific">Bifidobacterium adolescentis (strain ATCC 15703 / DSM 20083 / NCTC 11814 / E194a)</name>
    <dbReference type="NCBI Taxonomy" id="367928"/>
    <lineage>
        <taxon>Bacteria</taxon>
        <taxon>Bacillati</taxon>
        <taxon>Actinomycetota</taxon>
        <taxon>Actinomycetes</taxon>
        <taxon>Bifidobacteriales</taxon>
        <taxon>Bifidobacteriaceae</taxon>
        <taxon>Bifidobacterium</taxon>
    </lineage>
</organism>
<keyword id="KW-0001">2Fe-2S</keyword>
<keyword id="KW-0028">Amino-acid biosynthesis</keyword>
<keyword id="KW-0100">Branched-chain amino acid biosynthesis</keyword>
<keyword id="KW-0408">Iron</keyword>
<keyword id="KW-0411">Iron-sulfur</keyword>
<keyword id="KW-0456">Lyase</keyword>
<keyword id="KW-0460">Magnesium</keyword>
<keyword id="KW-0479">Metal-binding</keyword>
<keyword id="KW-1185">Reference proteome</keyword>
<reference key="1">
    <citation type="submission" date="2006-12" db="EMBL/GenBank/DDBJ databases">
        <title>Bifidobacterium adolescentis complete genome sequence.</title>
        <authorList>
            <person name="Suzuki T."/>
            <person name="Tsuda Y."/>
            <person name="Kanou N."/>
            <person name="Inoue T."/>
            <person name="Kumazaki K."/>
            <person name="Nagano S."/>
            <person name="Hirai S."/>
            <person name="Tanaka K."/>
            <person name="Watanabe K."/>
        </authorList>
    </citation>
    <scope>NUCLEOTIDE SEQUENCE [LARGE SCALE GENOMIC DNA]</scope>
    <source>
        <strain>ATCC 15703 / DSM 20083 / NCTC 11814 / E194a</strain>
    </source>
</reference>
<feature type="chain" id="PRO_0000321592" description="Dihydroxy-acid dehydratase">
    <location>
        <begin position="1"/>
        <end position="619"/>
    </location>
</feature>
<feature type="active site" description="Proton acceptor" evidence="1">
    <location>
        <position position="518"/>
    </location>
</feature>
<feature type="binding site" evidence="1">
    <location>
        <position position="80"/>
    </location>
    <ligand>
        <name>Mg(2+)</name>
        <dbReference type="ChEBI" id="CHEBI:18420"/>
    </ligand>
</feature>
<feature type="binding site" evidence="1">
    <location>
        <position position="121"/>
    </location>
    <ligand>
        <name>[2Fe-2S] cluster</name>
        <dbReference type="ChEBI" id="CHEBI:190135"/>
    </ligand>
</feature>
<feature type="binding site" evidence="1">
    <location>
        <position position="122"/>
    </location>
    <ligand>
        <name>Mg(2+)</name>
        <dbReference type="ChEBI" id="CHEBI:18420"/>
    </ligand>
</feature>
<feature type="binding site" description="via carbamate group" evidence="1">
    <location>
        <position position="123"/>
    </location>
    <ligand>
        <name>Mg(2+)</name>
        <dbReference type="ChEBI" id="CHEBI:18420"/>
    </ligand>
</feature>
<feature type="binding site" evidence="1">
    <location>
        <position position="196"/>
    </location>
    <ligand>
        <name>[2Fe-2S] cluster</name>
        <dbReference type="ChEBI" id="CHEBI:190135"/>
    </ligand>
</feature>
<feature type="binding site" evidence="1">
    <location>
        <position position="492"/>
    </location>
    <ligand>
        <name>Mg(2+)</name>
        <dbReference type="ChEBI" id="CHEBI:18420"/>
    </ligand>
</feature>
<feature type="modified residue" description="N6-carboxylysine" evidence="1">
    <location>
        <position position="123"/>
    </location>
</feature>
<proteinExistence type="inferred from homology"/>
<sequence>MEMRSAKLMNGRVFAGARALYRAAGVDGKDFGKPIIAIANSFDEFLPGHVHLNKVGRLISDAIKEAGGIPREFNTMAVDDGIAMGHTGMLYSLPSRDIIADTVEYQVNAHCADALICIPNCDKVVPGMLMAALRLNIPTVFVSGGPMEAGTTVLPDGTVKKNTDLIDVMYASADDNLNEEDLLAYEKTVCPTCGSCAGMFTANSMNCLTEAIGLALPGNGTILASHSYRKDLFKRAAEQVVKIAKQYYDDDDDSVLPRSIATKKAFENAMTMDVAMGGSTNTVLHILAMAQSADVDFTLDDIERISHTVPCICKASPSGEWEISDVHRAGGITGILGELDRAGKLHRDVHSIDYKSLEDKLNDWDIMRDTCTEEAKQMYLAAPGHIVSPEPWTHTTLFDSLDRDRVNGAIHDIDHPAVTEGGLAVLRGNLAPDGCVVKTAGVPKEIWTFRGPALVVESQEQAIEVILNDTLKPGMALVIRYEGPKGGPGMQEMLYPTSFVKGKGIGKQVAMLTDGRYSGGSSGLAIGHIAPEAANKGPIALIKNGDIINIDIPNRTVNVELSDEELAQRRAELEAGDGYVAHRDRKVSQALKAYAAFARSADKGATRDPELIDKLSGLA</sequence>
<evidence type="ECO:0000255" key="1">
    <source>
        <dbReference type="HAMAP-Rule" id="MF_00012"/>
    </source>
</evidence>
<accession>A1A0T7</accession>
<gene>
    <name evidence="1" type="primary">ilvD</name>
    <name type="ordered locus">BAD_0539</name>
</gene>
<dbReference type="EC" id="4.2.1.9" evidence="1"/>
<dbReference type="EMBL" id="AP009256">
    <property type="protein sequence ID" value="BAF39320.1"/>
    <property type="molecule type" value="Genomic_DNA"/>
</dbReference>
<dbReference type="RefSeq" id="WP_003808620.1">
    <property type="nucleotide sequence ID" value="NZ_CAXVKE010000001.1"/>
</dbReference>
<dbReference type="SMR" id="A1A0T7"/>
<dbReference type="STRING" id="367928.BAD_0539"/>
<dbReference type="PaxDb" id="1680-BADO_0552"/>
<dbReference type="GeneID" id="4556215"/>
<dbReference type="KEGG" id="bad:BAD_0539"/>
<dbReference type="HOGENOM" id="CLU_014271_4_2_11"/>
<dbReference type="UniPathway" id="UPA00047">
    <property type="reaction ID" value="UER00057"/>
</dbReference>
<dbReference type="UniPathway" id="UPA00049">
    <property type="reaction ID" value="UER00061"/>
</dbReference>
<dbReference type="Proteomes" id="UP000008702">
    <property type="component" value="Chromosome"/>
</dbReference>
<dbReference type="GO" id="GO:0005829">
    <property type="term" value="C:cytosol"/>
    <property type="evidence" value="ECO:0007669"/>
    <property type="project" value="TreeGrafter"/>
</dbReference>
<dbReference type="GO" id="GO:0051537">
    <property type="term" value="F:2 iron, 2 sulfur cluster binding"/>
    <property type="evidence" value="ECO:0007669"/>
    <property type="project" value="UniProtKB-UniRule"/>
</dbReference>
<dbReference type="GO" id="GO:0004160">
    <property type="term" value="F:dihydroxy-acid dehydratase activity"/>
    <property type="evidence" value="ECO:0007669"/>
    <property type="project" value="UniProtKB-UniRule"/>
</dbReference>
<dbReference type="GO" id="GO:0000287">
    <property type="term" value="F:magnesium ion binding"/>
    <property type="evidence" value="ECO:0007669"/>
    <property type="project" value="UniProtKB-UniRule"/>
</dbReference>
<dbReference type="GO" id="GO:0009097">
    <property type="term" value="P:isoleucine biosynthetic process"/>
    <property type="evidence" value="ECO:0007669"/>
    <property type="project" value="UniProtKB-UniRule"/>
</dbReference>
<dbReference type="GO" id="GO:0009099">
    <property type="term" value="P:L-valine biosynthetic process"/>
    <property type="evidence" value="ECO:0007669"/>
    <property type="project" value="UniProtKB-UniRule"/>
</dbReference>
<dbReference type="FunFam" id="3.50.30.80:FF:000001">
    <property type="entry name" value="Dihydroxy-acid dehydratase"/>
    <property type="match status" value="1"/>
</dbReference>
<dbReference type="Gene3D" id="3.50.30.80">
    <property type="entry name" value="IlvD/EDD C-terminal domain-like"/>
    <property type="match status" value="1"/>
</dbReference>
<dbReference type="HAMAP" id="MF_00012">
    <property type="entry name" value="IlvD"/>
    <property type="match status" value="1"/>
</dbReference>
<dbReference type="InterPro" id="IPR042096">
    <property type="entry name" value="Dihydro-acid_dehy_C"/>
</dbReference>
<dbReference type="InterPro" id="IPR004404">
    <property type="entry name" value="DihydroxyA_deHydtase"/>
</dbReference>
<dbReference type="InterPro" id="IPR020558">
    <property type="entry name" value="DiOHA_6PGluconate_deHydtase_CS"/>
</dbReference>
<dbReference type="InterPro" id="IPR056740">
    <property type="entry name" value="ILV_EDD_C"/>
</dbReference>
<dbReference type="InterPro" id="IPR000581">
    <property type="entry name" value="ILV_EDD_N"/>
</dbReference>
<dbReference type="InterPro" id="IPR037237">
    <property type="entry name" value="IlvD/EDD_N"/>
</dbReference>
<dbReference type="NCBIfam" id="TIGR00110">
    <property type="entry name" value="ilvD"/>
    <property type="match status" value="1"/>
</dbReference>
<dbReference type="NCBIfam" id="NF009103">
    <property type="entry name" value="PRK12448.1"/>
    <property type="match status" value="1"/>
</dbReference>
<dbReference type="PANTHER" id="PTHR43661">
    <property type="entry name" value="D-XYLONATE DEHYDRATASE"/>
    <property type="match status" value="1"/>
</dbReference>
<dbReference type="PANTHER" id="PTHR43661:SF3">
    <property type="entry name" value="D-XYLONATE DEHYDRATASE YAGF-RELATED"/>
    <property type="match status" value="1"/>
</dbReference>
<dbReference type="Pfam" id="PF24877">
    <property type="entry name" value="ILV_EDD_C"/>
    <property type="match status" value="1"/>
</dbReference>
<dbReference type="Pfam" id="PF00920">
    <property type="entry name" value="ILVD_EDD_N"/>
    <property type="match status" value="1"/>
</dbReference>
<dbReference type="SUPFAM" id="SSF143975">
    <property type="entry name" value="IlvD/EDD N-terminal domain-like"/>
    <property type="match status" value="1"/>
</dbReference>
<dbReference type="SUPFAM" id="SSF52016">
    <property type="entry name" value="LeuD/IlvD-like"/>
    <property type="match status" value="1"/>
</dbReference>
<dbReference type="PROSITE" id="PS00886">
    <property type="entry name" value="ILVD_EDD_1"/>
    <property type="match status" value="1"/>
</dbReference>
<dbReference type="PROSITE" id="PS00887">
    <property type="entry name" value="ILVD_EDD_2"/>
    <property type="match status" value="1"/>
</dbReference>
<name>ILVD_BIFAA</name>
<protein>
    <recommendedName>
        <fullName evidence="1">Dihydroxy-acid dehydratase</fullName>
        <shortName evidence="1">DAD</shortName>
        <ecNumber evidence="1">4.2.1.9</ecNumber>
    </recommendedName>
</protein>